<evidence type="ECO:0000255" key="1">
    <source>
        <dbReference type="HAMAP-Rule" id="MF_00113"/>
    </source>
</evidence>
<keyword id="KW-0963">Cytoplasm</keyword>
<keyword id="KW-0671">Queuosine biosynthesis</keyword>
<keyword id="KW-0949">S-adenosyl-L-methionine</keyword>
<keyword id="KW-0808">Transferase</keyword>
<organism>
    <name type="scientific">Paraburkholderia phytofirmans (strain DSM 17436 / LMG 22146 / PsJN)</name>
    <name type="common">Burkholderia phytofirmans</name>
    <dbReference type="NCBI Taxonomy" id="398527"/>
    <lineage>
        <taxon>Bacteria</taxon>
        <taxon>Pseudomonadati</taxon>
        <taxon>Pseudomonadota</taxon>
        <taxon>Betaproteobacteria</taxon>
        <taxon>Burkholderiales</taxon>
        <taxon>Burkholderiaceae</taxon>
        <taxon>Paraburkholderia</taxon>
    </lineage>
</organism>
<sequence length="352" mass="38763">MLTLSDFDFDLPPELIAQVALPERSASRLLEVDNPAGAAGPARLIDRRFAELPECIAPGDLLVFNDTKVLKARFLGQKASGGKIEVLVERLTGERTALAQIRASKSPQPGTTIRLADAFDVTVGERVEPFYTLHFPDDCLTLIEQFGRLPLPPYIEHDPDSTDETRYQTVFAQNPGAVAAPTAGLHFDDALLARLDEKGVERATLTLHVGAGTFQPVRVENLAEHKMHSEWYHLPQALADKIAATRARGNRVIAVGTTSMRALEAAARDAEAAGRPLAAASTETDIFITPGYKFRVVDRLVTNFHLPKSTLLMLVSAFAGVETIRETYRHAIEQRYRFFSYGDAMLLTRRDA</sequence>
<gene>
    <name evidence="1" type="primary">queA</name>
    <name type="ordered locus">Bphyt_0698</name>
</gene>
<reference key="1">
    <citation type="journal article" date="2011" name="J. Bacteriol.">
        <title>Complete genome sequence of the plant growth-promoting endophyte Burkholderia phytofirmans strain PsJN.</title>
        <authorList>
            <person name="Weilharter A."/>
            <person name="Mitter B."/>
            <person name="Shin M.V."/>
            <person name="Chain P.S."/>
            <person name="Nowak J."/>
            <person name="Sessitsch A."/>
        </authorList>
    </citation>
    <scope>NUCLEOTIDE SEQUENCE [LARGE SCALE GENOMIC DNA]</scope>
    <source>
        <strain>DSM 17436 / LMG 22146 / PsJN</strain>
    </source>
</reference>
<feature type="chain" id="PRO_1000094758" description="S-adenosylmethionine:tRNA ribosyltransferase-isomerase">
    <location>
        <begin position="1"/>
        <end position="352"/>
    </location>
</feature>
<accession>B2SX83</accession>
<proteinExistence type="inferred from homology"/>
<protein>
    <recommendedName>
        <fullName evidence="1">S-adenosylmethionine:tRNA ribosyltransferase-isomerase</fullName>
        <ecNumber evidence="1">2.4.99.17</ecNumber>
    </recommendedName>
    <alternativeName>
        <fullName evidence="1">Queuosine biosynthesis protein QueA</fullName>
    </alternativeName>
</protein>
<name>QUEA_PARPJ</name>
<comment type="function">
    <text evidence="1">Transfers and isomerizes the ribose moiety from AdoMet to the 7-aminomethyl group of 7-deazaguanine (preQ1-tRNA) to give epoxyqueuosine (oQ-tRNA).</text>
</comment>
<comment type="catalytic activity">
    <reaction evidence="1">
        <text>7-aminomethyl-7-carbaguanosine(34) in tRNA + S-adenosyl-L-methionine = epoxyqueuosine(34) in tRNA + adenine + L-methionine + 2 H(+)</text>
        <dbReference type="Rhea" id="RHEA:32155"/>
        <dbReference type="Rhea" id="RHEA-COMP:10342"/>
        <dbReference type="Rhea" id="RHEA-COMP:18582"/>
        <dbReference type="ChEBI" id="CHEBI:15378"/>
        <dbReference type="ChEBI" id="CHEBI:16708"/>
        <dbReference type="ChEBI" id="CHEBI:57844"/>
        <dbReference type="ChEBI" id="CHEBI:59789"/>
        <dbReference type="ChEBI" id="CHEBI:82833"/>
        <dbReference type="ChEBI" id="CHEBI:194443"/>
        <dbReference type="EC" id="2.4.99.17"/>
    </reaction>
</comment>
<comment type="pathway">
    <text evidence="1">tRNA modification; tRNA-queuosine biosynthesis.</text>
</comment>
<comment type="subunit">
    <text evidence="1">Monomer.</text>
</comment>
<comment type="subcellular location">
    <subcellularLocation>
        <location evidence="1">Cytoplasm</location>
    </subcellularLocation>
</comment>
<comment type="similarity">
    <text evidence="1">Belongs to the QueA family.</text>
</comment>
<dbReference type="EC" id="2.4.99.17" evidence="1"/>
<dbReference type="EMBL" id="CP001052">
    <property type="protein sequence ID" value="ACD15122.1"/>
    <property type="molecule type" value="Genomic_DNA"/>
</dbReference>
<dbReference type="RefSeq" id="WP_012431759.1">
    <property type="nucleotide sequence ID" value="NC_010681.1"/>
</dbReference>
<dbReference type="SMR" id="B2SX83"/>
<dbReference type="STRING" id="398527.Bphyt_0698"/>
<dbReference type="KEGG" id="bpy:Bphyt_0698"/>
<dbReference type="eggNOG" id="COG0809">
    <property type="taxonomic scope" value="Bacteria"/>
</dbReference>
<dbReference type="HOGENOM" id="CLU_039110_1_0_4"/>
<dbReference type="OrthoDB" id="9805933at2"/>
<dbReference type="UniPathway" id="UPA00392"/>
<dbReference type="Proteomes" id="UP000001739">
    <property type="component" value="Chromosome 1"/>
</dbReference>
<dbReference type="GO" id="GO:0005737">
    <property type="term" value="C:cytoplasm"/>
    <property type="evidence" value="ECO:0007669"/>
    <property type="project" value="UniProtKB-SubCell"/>
</dbReference>
<dbReference type="GO" id="GO:0051075">
    <property type="term" value="F:S-adenosylmethionine:tRNA ribosyltransferase-isomerase activity"/>
    <property type="evidence" value="ECO:0007669"/>
    <property type="project" value="UniProtKB-EC"/>
</dbReference>
<dbReference type="GO" id="GO:0008616">
    <property type="term" value="P:queuosine biosynthetic process"/>
    <property type="evidence" value="ECO:0007669"/>
    <property type="project" value="UniProtKB-UniRule"/>
</dbReference>
<dbReference type="GO" id="GO:0002099">
    <property type="term" value="P:tRNA wobble guanine modification"/>
    <property type="evidence" value="ECO:0007669"/>
    <property type="project" value="TreeGrafter"/>
</dbReference>
<dbReference type="FunFam" id="3.40.1780.10:FF:000001">
    <property type="entry name" value="S-adenosylmethionine:tRNA ribosyltransferase-isomerase"/>
    <property type="match status" value="1"/>
</dbReference>
<dbReference type="Gene3D" id="2.40.10.240">
    <property type="entry name" value="QueA-like"/>
    <property type="match status" value="1"/>
</dbReference>
<dbReference type="Gene3D" id="3.40.1780.10">
    <property type="entry name" value="QueA-like"/>
    <property type="match status" value="1"/>
</dbReference>
<dbReference type="HAMAP" id="MF_00113">
    <property type="entry name" value="QueA"/>
    <property type="match status" value="1"/>
</dbReference>
<dbReference type="InterPro" id="IPR003699">
    <property type="entry name" value="QueA"/>
</dbReference>
<dbReference type="InterPro" id="IPR042118">
    <property type="entry name" value="QueA_dom1"/>
</dbReference>
<dbReference type="InterPro" id="IPR042119">
    <property type="entry name" value="QueA_dom2"/>
</dbReference>
<dbReference type="InterPro" id="IPR036100">
    <property type="entry name" value="QueA_sf"/>
</dbReference>
<dbReference type="NCBIfam" id="NF001140">
    <property type="entry name" value="PRK00147.1"/>
    <property type="match status" value="1"/>
</dbReference>
<dbReference type="NCBIfam" id="TIGR00113">
    <property type="entry name" value="queA"/>
    <property type="match status" value="1"/>
</dbReference>
<dbReference type="PANTHER" id="PTHR30307">
    <property type="entry name" value="S-ADENOSYLMETHIONINE:TRNA RIBOSYLTRANSFERASE-ISOMERASE"/>
    <property type="match status" value="1"/>
</dbReference>
<dbReference type="PANTHER" id="PTHR30307:SF0">
    <property type="entry name" value="S-ADENOSYLMETHIONINE:TRNA RIBOSYLTRANSFERASE-ISOMERASE"/>
    <property type="match status" value="1"/>
</dbReference>
<dbReference type="Pfam" id="PF02547">
    <property type="entry name" value="Queuosine_synth"/>
    <property type="match status" value="1"/>
</dbReference>
<dbReference type="SUPFAM" id="SSF111337">
    <property type="entry name" value="QueA-like"/>
    <property type="match status" value="1"/>
</dbReference>